<evidence type="ECO:0000255" key="1">
    <source>
        <dbReference type="HAMAP-Rule" id="MF_01306"/>
    </source>
</evidence>
<evidence type="ECO:0000256" key="2">
    <source>
        <dbReference type="SAM" id="MobiDB-lite"/>
    </source>
</evidence>
<evidence type="ECO:0000305" key="3"/>
<organism>
    <name type="scientific">Ligilactobacillus salivarius (strain UCC118)</name>
    <name type="common">Lactobacillus salivarius</name>
    <dbReference type="NCBI Taxonomy" id="362948"/>
    <lineage>
        <taxon>Bacteria</taxon>
        <taxon>Bacillati</taxon>
        <taxon>Bacillota</taxon>
        <taxon>Bacilli</taxon>
        <taxon>Lactobacillales</taxon>
        <taxon>Lactobacillaceae</taxon>
        <taxon>Ligilactobacillus</taxon>
    </lineage>
</organism>
<keyword id="KW-1185">Reference proteome</keyword>
<keyword id="KW-0687">Ribonucleoprotein</keyword>
<keyword id="KW-0689">Ribosomal protein</keyword>
<keyword id="KW-0694">RNA-binding</keyword>
<keyword id="KW-0699">rRNA-binding</keyword>
<comment type="function">
    <text evidence="1">One of the primary rRNA binding proteins, it binds directly to 16S rRNA where it nucleates assembly of the body of the 30S subunit.</text>
</comment>
<comment type="function">
    <text evidence="1">With S5 and S12 plays an important role in translational accuracy.</text>
</comment>
<comment type="subunit">
    <text evidence="1">Part of the 30S ribosomal subunit. Contacts protein S5. The interaction surface between S4 and S5 is involved in control of translational fidelity.</text>
</comment>
<comment type="similarity">
    <text evidence="1">Belongs to the universal ribosomal protein uS4 family.</text>
</comment>
<proteinExistence type="inferred from homology"/>
<name>RS4_LIGS1</name>
<accession>Q1WT66</accession>
<reference key="1">
    <citation type="journal article" date="2006" name="Proc. Natl. Acad. Sci. U.S.A.">
        <title>Multireplicon genome architecture of Lactobacillus salivarius.</title>
        <authorList>
            <person name="Claesson M.J."/>
            <person name="Li Y."/>
            <person name="Leahy S."/>
            <person name="Canchaya C."/>
            <person name="van Pijkeren J.P."/>
            <person name="Cerdeno-Tarraga A.M."/>
            <person name="Parkhill J."/>
            <person name="Flynn S."/>
            <person name="O'Sullivan G.C."/>
            <person name="Collins J.K."/>
            <person name="Higgins D."/>
            <person name="Shanahan F."/>
            <person name="Fitzgerald G.F."/>
            <person name="van Sinderen D."/>
            <person name="O'Toole P.W."/>
        </authorList>
    </citation>
    <scope>NUCLEOTIDE SEQUENCE [LARGE SCALE GENOMIC DNA]</scope>
    <source>
        <strain>UCC118</strain>
    </source>
</reference>
<gene>
    <name evidence="1" type="primary">rpsD</name>
    <name type="ordered locus">LSL_1077</name>
</gene>
<sequence>MSRYTGPSWKVSRRLGFSLSGTGKELSRRPYAPGQHGQDRRGSLSEYGLQLREKQKLRMTYGLTERQFSNLFKRAGKIREGKHGDNFMILLERRLDNVVYRLGLASTRRQARQLVNHGHITVDGKRVDIPSYEVEPGQVISLRERSKDLQIVKEALEAVVGRVPFVNFDENKMEGTLVRLPDREELDANIDEALVVEFYNR</sequence>
<protein>
    <recommendedName>
        <fullName evidence="1">Small ribosomal subunit protein uS4</fullName>
    </recommendedName>
    <alternativeName>
        <fullName evidence="3">30S ribosomal protein S4</fullName>
    </alternativeName>
</protein>
<feature type="chain" id="PRO_0000293298" description="Small ribosomal subunit protein uS4">
    <location>
        <begin position="1"/>
        <end position="201"/>
    </location>
</feature>
<feature type="domain" description="S4 RNA-binding" evidence="1">
    <location>
        <begin position="93"/>
        <end position="156"/>
    </location>
</feature>
<feature type="region of interest" description="Disordered" evidence="2">
    <location>
        <begin position="20"/>
        <end position="46"/>
    </location>
</feature>
<dbReference type="EMBL" id="CP000233">
    <property type="protein sequence ID" value="ABD99885.1"/>
    <property type="molecule type" value="Genomic_DNA"/>
</dbReference>
<dbReference type="RefSeq" id="WP_003703954.1">
    <property type="nucleotide sequence ID" value="NC_007929.1"/>
</dbReference>
<dbReference type="RefSeq" id="YP_535968.1">
    <property type="nucleotide sequence ID" value="NC_007929.1"/>
</dbReference>
<dbReference type="SMR" id="Q1WT66"/>
<dbReference type="STRING" id="362948.LSL_1077"/>
<dbReference type="GeneID" id="89465816"/>
<dbReference type="KEGG" id="lsl:LSL_1077"/>
<dbReference type="PATRIC" id="fig|362948.14.peg.1150"/>
<dbReference type="HOGENOM" id="CLU_092403_0_1_9"/>
<dbReference type="OrthoDB" id="9803672at2"/>
<dbReference type="Proteomes" id="UP000006559">
    <property type="component" value="Chromosome"/>
</dbReference>
<dbReference type="GO" id="GO:0015935">
    <property type="term" value="C:small ribosomal subunit"/>
    <property type="evidence" value="ECO:0007669"/>
    <property type="project" value="InterPro"/>
</dbReference>
<dbReference type="GO" id="GO:0019843">
    <property type="term" value="F:rRNA binding"/>
    <property type="evidence" value="ECO:0007669"/>
    <property type="project" value="UniProtKB-UniRule"/>
</dbReference>
<dbReference type="GO" id="GO:0003735">
    <property type="term" value="F:structural constituent of ribosome"/>
    <property type="evidence" value="ECO:0007669"/>
    <property type="project" value="InterPro"/>
</dbReference>
<dbReference type="GO" id="GO:0042274">
    <property type="term" value="P:ribosomal small subunit biogenesis"/>
    <property type="evidence" value="ECO:0007669"/>
    <property type="project" value="TreeGrafter"/>
</dbReference>
<dbReference type="GO" id="GO:0006412">
    <property type="term" value="P:translation"/>
    <property type="evidence" value="ECO:0007669"/>
    <property type="project" value="UniProtKB-UniRule"/>
</dbReference>
<dbReference type="CDD" id="cd00165">
    <property type="entry name" value="S4"/>
    <property type="match status" value="1"/>
</dbReference>
<dbReference type="FunFam" id="1.10.1050.10:FF:000001">
    <property type="entry name" value="30S ribosomal protein S4"/>
    <property type="match status" value="1"/>
</dbReference>
<dbReference type="FunFam" id="3.10.290.10:FF:000001">
    <property type="entry name" value="30S ribosomal protein S4"/>
    <property type="match status" value="1"/>
</dbReference>
<dbReference type="Gene3D" id="1.10.1050.10">
    <property type="entry name" value="Ribosomal Protein S4 Delta 41, Chain A, domain 1"/>
    <property type="match status" value="1"/>
</dbReference>
<dbReference type="Gene3D" id="3.10.290.10">
    <property type="entry name" value="RNA-binding S4 domain"/>
    <property type="match status" value="1"/>
</dbReference>
<dbReference type="HAMAP" id="MF_01306_B">
    <property type="entry name" value="Ribosomal_uS4_B"/>
    <property type="match status" value="1"/>
</dbReference>
<dbReference type="InterPro" id="IPR022801">
    <property type="entry name" value="Ribosomal_uS4"/>
</dbReference>
<dbReference type="InterPro" id="IPR005709">
    <property type="entry name" value="Ribosomal_uS4_bac-type"/>
</dbReference>
<dbReference type="InterPro" id="IPR018079">
    <property type="entry name" value="Ribosomal_uS4_CS"/>
</dbReference>
<dbReference type="InterPro" id="IPR001912">
    <property type="entry name" value="Ribosomal_uS4_N"/>
</dbReference>
<dbReference type="InterPro" id="IPR002942">
    <property type="entry name" value="S4_RNA-bd"/>
</dbReference>
<dbReference type="InterPro" id="IPR036986">
    <property type="entry name" value="S4_RNA-bd_sf"/>
</dbReference>
<dbReference type="NCBIfam" id="NF003717">
    <property type="entry name" value="PRK05327.1"/>
    <property type="match status" value="1"/>
</dbReference>
<dbReference type="NCBIfam" id="TIGR01017">
    <property type="entry name" value="rpsD_bact"/>
    <property type="match status" value="1"/>
</dbReference>
<dbReference type="PANTHER" id="PTHR11831">
    <property type="entry name" value="30S 40S RIBOSOMAL PROTEIN"/>
    <property type="match status" value="1"/>
</dbReference>
<dbReference type="PANTHER" id="PTHR11831:SF4">
    <property type="entry name" value="SMALL RIBOSOMAL SUBUNIT PROTEIN US4M"/>
    <property type="match status" value="1"/>
</dbReference>
<dbReference type="Pfam" id="PF00163">
    <property type="entry name" value="Ribosomal_S4"/>
    <property type="match status" value="1"/>
</dbReference>
<dbReference type="Pfam" id="PF01479">
    <property type="entry name" value="S4"/>
    <property type="match status" value="1"/>
</dbReference>
<dbReference type="SMART" id="SM01390">
    <property type="entry name" value="Ribosomal_S4"/>
    <property type="match status" value="1"/>
</dbReference>
<dbReference type="SMART" id="SM00363">
    <property type="entry name" value="S4"/>
    <property type="match status" value="1"/>
</dbReference>
<dbReference type="SUPFAM" id="SSF55174">
    <property type="entry name" value="Alpha-L RNA-binding motif"/>
    <property type="match status" value="1"/>
</dbReference>
<dbReference type="PROSITE" id="PS00632">
    <property type="entry name" value="RIBOSOMAL_S4"/>
    <property type="match status" value="1"/>
</dbReference>
<dbReference type="PROSITE" id="PS50889">
    <property type="entry name" value="S4"/>
    <property type="match status" value="1"/>
</dbReference>